<proteinExistence type="inferred from homology"/>
<geneLocation type="chloroplast"/>
<protein>
    <recommendedName>
        <fullName evidence="1">Large ribosomal subunit protein bL36c</fullName>
    </recommendedName>
    <alternativeName>
        <fullName evidence="2">50S ribosomal protein L36, chloroplastic</fullName>
    </alternativeName>
</protein>
<accession>A6YGD2</accession>
<feature type="chain" id="PRO_0000344767" description="Large ribosomal subunit protein bL36c">
    <location>
        <begin position="1"/>
        <end position="37"/>
    </location>
</feature>
<gene>
    <name evidence="1" type="primary">rpl36</name>
</gene>
<comment type="subcellular location">
    <subcellularLocation>
        <location>Plastid</location>
        <location>Chloroplast</location>
    </subcellularLocation>
</comment>
<comment type="similarity">
    <text evidence="1">Belongs to the bacterial ribosomal protein bL36 family.</text>
</comment>
<name>RK36_PLETE</name>
<evidence type="ECO:0000255" key="1">
    <source>
        <dbReference type="HAMAP-Rule" id="MF_00251"/>
    </source>
</evidence>
<evidence type="ECO:0000305" key="2"/>
<reference key="1">
    <citation type="journal article" date="2007" name="BMC Genomics">
        <title>The chloroplast genome sequence of the green alga Leptosira terrestris: multiple losses of the inverted repeat and extensive genome rearrangements within the Trebouxiophyceae.</title>
        <authorList>
            <person name="de Cambiaire J.-C."/>
            <person name="Otis C."/>
            <person name="Turmel M."/>
            <person name="Lemieux C."/>
        </authorList>
    </citation>
    <scope>NUCLEOTIDE SEQUENCE [LARGE SCALE GENOMIC DNA]</scope>
    <source>
        <strain>CCAP 463/2 / UTEX 333</strain>
    </source>
</reference>
<dbReference type="EMBL" id="EF506945">
    <property type="protein sequence ID" value="ABO69345.1"/>
    <property type="molecule type" value="Genomic_DNA"/>
</dbReference>
<dbReference type="RefSeq" id="YP_001382209.1">
    <property type="nucleotide sequence ID" value="NC_009681.1"/>
</dbReference>
<dbReference type="SMR" id="A6YGD2"/>
<dbReference type="GeneID" id="5383771"/>
<dbReference type="GO" id="GO:0009507">
    <property type="term" value="C:chloroplast"/>
    <property type="evidence" value="ECO:0007669"/>
    <property type="project" value="UniProtKB-SubCell"/>
</dbReference>
<dbReference type="GO" id="GO:1990904">
    <property type="term" value="C:ribonucleoprotein complex"/>
    <property type="evidence" value="ECO:0007669"/>
    <property type="project" value="UniProtKB-KW"/>
</dbReference>
<dbReference type="GO" id="GO:0005840">
    <property type="term" value="C:ribosome"/>
    <property type="evidence" value="ECO:0007669"/>
    <property type="project" value="UniProtKB-KW"/>
</dbReference>
<dbReference type="GO" id="GO:0003735">
    <property type="term" value="F:structural constituent of ribosome"/>
    <property type="evidence" value="ECO:0007669"/>
    <property type="project" value="InterPro"/>
</dbReference>
<dbReference type="GO" id="GO:0006412">
    <property type="term" value="P:translation"/>
    <property type="evidence" value="ECO:0007669"/>
    <property type="project" value="UniProtKB-UniRule"/>
</dbReference>
<dbReference type="HAMAP" id="MF_00251">
    <property type="entry name" value="Ribosomal_bL36"/>
    <property type="match status" value="1"/>
</dbReference>
<dbReference type="InterPro" id="IPR000473">
    <property type="entry name" value="Ribosomal_bL36"/>
</dbReference>
<dbReference type="InterPro" id="IPR035977">
    <property type="entry name" value="Ribosomal_bL36_sp"/>
</dbReference>
<dbReference type="NCBIfam" id="TIGR01022">
    <property type="entry name" value="rpmJ_bact"/>
    <property type="match status" value="1"/>
</dbReference>
<dbReference type="PANTHER" id="PTHR42888">
    <property type="entry name" value="50S RIBOSOMAL PROTEIN L36, CHLOROPLASTIC"/>
    <property type="match status" value="1"/>
</dbReference>
<dbReference type="PANTHER" id="PTHR42888:SF1">
    <property type="entry name" value="LARGE RIBOSOMAL SUBUNIT PROTEIN BL36C"/>
    <property type="match status" value="1"/>
</dbReference>
<dbReference type="Pfam" id="PF00444">
    <property type="entry name" value="Ribosomal_L36"/>
    <property type="match status" value="1"/>
</dbReference>
<dbReference type="SUPFAM" id="SSF57840">
    <property type="entry name" value="Ribosomal protein L36"/>
    <property type="match status" value="1"/>
</dbReference>
<dbReference type="PROSITE" id="PS00828">
    <property type="entry name" value="RIBOSOMAL_L36"/>
    <property type="match status" value="1"/>
</dbReference>
<sequence length="37" mass="4450">MKVRASVRKICINCRLIRRKRKIMVICSNPKHKQRQG</sequence>
<organism>
    <name type="scientific">Pleurastrum terricola</name>
    <name type="common">Filamentous green alga</name>
    <name type="synonym">Leptosira terrestris</name>
    <dbReference type="NCBI Taxonomy" id="34116"/>
    <lineage>
        <taxon>Eukaryota</taxon>
        <taxon>Viridiplantae</taxon>
        <taxon>Chlorophyta</taxon>
        <taxon>core chlorophytes</taxon>
        <taxon>Chlorophyceae</taxon>
        <taxon>CS clade</taxon>
        <taxon>Chlamydomonadales</taxon>
        <taxon>Pleurastraceae</taxon>
        <taxon>Pleurastrum</taxon>
    </lineage>
</organism>
<keyword id="KW-0150">Chloroplast</keyword>
<keyword id="KW-0934">Plastid</keyword>
<keyword id="KW-0687">Ribonucleoprotein</keyword>
<keyword id="KW-0689">Ribosomal protein</keyword>